<reference key="1">
    <citation type="journal article" date="2000" name="Eur. J. Biochem.">
        <title>Structure and chromosomal localization of human and mouse genes for hematopoietic prostaglandin D synthase.</title>
        <authorList>
            <person name="Kanaoka Y."/>
            <person name="Fujimori K."/>
            <person name="Kikuno R."/>
            <person name="Sakaguchi Y."/>
            <person name="Urade Y."/>
            <person name="Hayaishi O."/>
        </authorList>
    </citation>
    <scope>NUCLEOTIDE SEQUENCE [GENOMIC DNA / MRNA]</scope>
    <scope>FUNCTION</scope>
    <scope>CATALYTIC ACTIVITY</scope>
    <scope>COFACTOR</scope>
    <scope>TISSUE SPECIFICITY</scope>
    <source>
        <tissue>Placenta</tissue>
    </source>
</reference>
<reference key="2">
    <citation type="journal article" date="2001" name="Biochem. J.">
        <title>Mammalian class Sigma glutathione S-transferases: catalytic properties and tissue-specific expression of human and rat GSH-dependent prostaglandin D2 synthases.</title>
        <authorList>
            <person name="Jowsey I.R."/>
            <person name="Thomson A.M."/>
            <person name="Flanagan J.U."/>
            <person name="Murdock P.R."/>
            <person name="Moore G.B."/>
            <person name="Meyer D.J."/>
            <person name="Murphy G.J."/>
            <person name="Smith S.A."/>
            <person name="Hayes J.D."/>
        </authorList>
    </citation>
    <scope>NUCLEOTIDE SEQUENCE [MRNA]</scope>
    <scope>FUNCTION</scope>
    <scope>CATALYTIC ACTIVITY</scope>
    <scope>COFACTOR</scope>
    <scope>BIOPHYSICOCHEMICAL PROPERTIES</scope>
    <scope>TISSUE SPECIFICITY</scope>
    <source>
        <tissue>Placenta</tissue>
    </source>
</reference>
<reference key="3">
    <citation type="journal article" date="2004" name="Nat. Genet.">
        <title>Complete sequencing and characterization of 21,243 full-length human cDNAs.</title>
        <authorList>
            <person name="Ota T."/>
            <person name="Suzuki Y."/>
            <person name="Nishikawa T."/>
            <person name="Otsuki T."/>
            <person name="Sugiyama T."/>
            <person name="Irie R."/>
            <person name="Wakamatsu A."/>
            <person name="Hayashi K."/>
            <person name="Sato H."/>
            <person name="Nagai K."/>
            <person name="Kimura K."/>
            <person name="Makita H."/>
            <person name="Sekine M."/>
            <person name="Obayashi M."/>
            <person name="Nishi T."/>
            <person name="Shibahara T."/>
            <person name="Tanaka T."/>
            <person name="Ishii S."/>
            <person name="Yamamoto J."/>
            <person name="Saito K."/>
            <person name="Kawai Y."/>
            <person name="Isono Y."/>
            <person name="Nakamura Y."/>
            <person name="Nagahari K."/>
            <person name="Murakami K."/>
            <person name="Yasuda T."/>
            <person name="Iwayanagi T."/>
            <person name="Wagatsuma M."/>
            <person name="Shiratori A."/>
            <person name="Sudo H."/>
            <person name="Hosoiri T."/>
            <person name="Kaku Y."/>
            <person name="Kodaira H."/>
            <person name="Kondo H."/>
            <person name="Sugawara M."/>
            <person name="Takahashi M."/>
            <person name="Kanda K."/>
            <person name="Yokoi T."/>
            <person name="Furuya T."/>
            <person name="Kikkawa E."/>
            <person name="Omura Y."/>
            <person name="Abe K."/>
            <person name="Kamihara K."/>
            <person name="Katsuta N."/>
            <person name="Sato K."/>
            <person name="Tanikawa M."/>
            <person name="Yamazaki M."/>
            <person name="Ninomiya K."/>
            <person name="Ishibashi T."/>
            <person name="Yamashita H."/>
            <person name="Murakawa K."/>
            <person name="Fujimori K."/>
            <person name="Tanai H."/>
            <person name="Kimata M."/>
            <person name="Watanabe M."/>
            <person name="Hiraoka S."/>
            <person name="Chiba Y."/>
            <person name="Ishida S."/>
            <person name="Ono Y."/>
            <person name="Takiguchi S."/>
            <person name="Watanabe S."/>
            <person name="Yosida M."/>
            <person name="Hotuta T."/>
            <person name="Kusano J."/>
            <person name="Kanehori K."/>
            <person name="Takahashi-Fujii A."/>
            <person name="Hara H."/>
            <person name="Tanase T.-O."/>
            <person name="Nomura Y."/>
            <person name="Togiya S."/>
            <person name="Komai F."/>
            <person name="Hara R."/>
            <person name="Takeuchi K."/>
            <person name="Arita M."/>
            <person name="Imose N."/>
            <person name="Musashino K."/>
            <person name="Yuuki H."/>
            <person name="Oshima A."/>
            <person name="Sasaki N."/>
            <person name="Aotsuka S."/>
            <person name="Yoshikawa Y."/>
            <person name="Matsunawa H."/>
            <person name="Ichihara T."/>
            <person name="Shiohata N."/>
            <person name="Sano S."/>
            <person name="Moriya S."/>
            <person name="Momiyama H."/>
            <person name="Satoh N."/>
            <person name="Takami S."/>
            <person name="Terashima Y."/>
            <person name="Suzuki O."/>
            <person name="Nakagawa S."/>
            <person name="Senoh A."/>
            <person name="Mizoguchi H."/>
            <person name="Goto Y."/>
            <person name="Shimizu F."/>
            <person name="Wakebe H."/>
            <person name="Hishigaki H."/>
            <person name="Watanabe T."/>
            <person name="Sugiyama A."/>
            <person name="Takemoto M."/>
            <person name="Kawakami B."/>
            <person name="Yamazaki M."/>
            <person name="Watanabe K."/>
            <person name="Kumagai A."/>
            <person name="Itakura S."/>
            <person name="Fukuzumi Y."/>
            <person name="Fujimori Y."/>
            <person name="Komiyama M."/>
            <person name="Tashiro H."/>
            <person name="Tanigami A."/>
            <person name="Fujiwara T."/>
            <person name="Ono T."/>
            <person name="Yamada K."/>
            <person name="Fujii Y."/>
            <person name="Ozaki K."/>
            <person name="Hirao M."/>
            <person name="Ohmori Y."/>
            <person name="Kawabata A."/>
            <person name="Hikiji T."/>
            <person name="Kobatake N."/>
            <person name="Inagaki H."/>
            <person name="Ikema Y."/>
            <person name="Okamoto S."/>
            <person name="Okitani R."/>
            <person name="Kawakami T."/>
            <person name="Noguchi S."/>
            <person name="Itoh T."/>
            <person name="Shigeta K."/>
            <person name="Senba T."/>
            <person name="Matsumura K."/>
            <person name="Nakajima Y."/>
            <person name="Mizuno T."/>
            <person name="Morinaga M."/>
            <person name="Sasaki M."/>
            <person name="Togashi T."/>
            <person name="Oyama M."/>
            <person name="Hata H."/>
            <person name="Watanabe M."/>
            <person name="Komatsu T."/>
            <person name="Mizushima-Sugano J."/>
            <person name="Satoh T."/>
            <person name="Shirai Y."/>
            <person name="Takahashi Y."/>
            <person name="Nakagawa K."/>
            <person name="Okumura K."/>
            <person name="Nagase T."/>
            <person name="Nomura N."/>
            <person name="Kikuchi H."/>
            <person name="Masuho Y."/>
            <person name="Yamashita R."/>
            <person name="Nakai K."/>
            <person name="Yada T."/>
            <person name="Nakamura Y."/>
            <person name="Ohara O."/>
            <person name="Isogai T."/>
            <person name="Sugano S."/>
        </authorList>
    </citation>
    <scope>NUCLEOTIDE SEQUENCE [LARGE SCALE MRNA]</scope>
    <source>
        <tissue>Substantia nigra</tissue>
    </source>
</reference>
<reference key="4">
    <citation type="submission" date="2004-06" db="EMBL/GenBank/DDBJ databases">
        <title>Cloning of human full open reading frames in Gateway(TM) system entry vector (pDONR201).</title>
        <authorList>
            <person name="Ebert L."/>
            <person name="Schick M."/>
            <person name="Neubert P."/>
            <person name="Schatten R."/>
            <person name="Henze S."/>
            <person name="Korn B."/>
        </authorList>
    </citation>
    <scope>NUCLEOTIDE SEQUENCE [LARGE SCALE MRNA]</scope>
</reference>
<reference key="5">
    <citation type="submission" date="2005-07" db="EMBL/GenBank/DDBJ databases">
        <authorList>
            <person name="Mural R.J."/>
            <person name="Istrail S."/>
            <person name="Sutton G.G."/>
            <person name="Florea L."/>
            <person name="Halpern A.L."/>
            <person name="Mobarry C.M."/>
            <person name="Lippert R."/>
            <person name="Walenz B."/>
            <person name="Shatkay H."/>
            <person name="Dew I."/>
            <person name="Miller J.R."/>
            <person name="Flanigan M.J."/>
            <person name="Edwards N.J."/>
            <person name="Bolanos R."/>
            <person name="Fasulo D."/>
            <person name="Halldorsson B.V."/>
            <person name="Hannenhalli S."/>
            <person name="Turner R."/>
            <person name="Yooseph S."/>
            <person name="Lu F."/>
            <person name="Nusskern D.R."/>
            <person name="Shue B.C."/>
            <person name="Zheng X.H."/>
            <person name="Zhong F."/>
            <person name="Delcher A.L."/>
            <person name="Huson D.H."/>
            <person name="Kravitz S.A."/>
            <person name="Mouchard L."/>
            <person name="Reinert K."/>
            <person name="Remington K.A."/>
            <person name="Clark A.G."/>
            <person name="Waterman M.S."/>
            <person name="Eichler E.E."/>
            <person name="Adams M.D."/>
            <person name="Hunkapiller M.W."/>
            <person name="Myers E.W."/>
            <person name="Venter J.C."/>
        </authorList>
    </citation>
    <scope>NUCLEOTIDE SEQUENCE [LARGE SCALE GENOMIC DNA]</scope>
</reference>
<reference key="6">
    <citation type="journal article" date="2004" name="Genome Res.">
        <title>The status, quality, and expansion of the NIH full-length cDNA project: the Mammalian Gene Collection (MGC).</title>
        <authorList>
            <consortium name="The MGC Project Team"/>
        </authorList>
    </citation>
    <scope>NUCLEOTIDE SEQUENCE [LARGE SCALE MRNA]</scope>
    <source>
        <tissue>Placenta</tissue>
    </source>
</reference>
<reference key="7">
    <citation type="journal article" date="1997" name="Biochem. Biophys. Res. Commun.">
        <title>Induction of hematopoietic prostaglandin D synthase in human megakaryocytic cells by phorbol ester.</title>
        <authorList>
            <person name="Suzuki T."/>
            <person name="Watanabe K."/>
            <person name="Kanaoka Y."/>
            <person name="Sato T."/>
            <person name="Hayaishi O."/>
        </authorList>
    </citation>
    <scope>FUNCTION</scope>
    <scope>CATALYTIC ACTIVITY</scope>
    <scope>COFACTOR</scope>
    <scope>TISSUE SPECIFICITY</scope>
    <scope>DEVELOPMENTAL STAGE</scope>
    <scope>INDUCTION</scope>
    <source>
        <tissue>Megakaryocyte</tissue>
    </source>
</reference>
<reference key="8">
    <citation type="journal article" date="1997" name="J. Biol. Chem.">
        <title>Prostaglandin D synthase in human megakaryoblastic cells.</title>
        <authorList>
            <person name="Mahmud I."/>
            <person name="Ueda N."/>
            <person name="Yamaguchi H."/>
            <person name="Yamashita R."/>
            <person name="Yamamoto S."/>
            <person name="Kanaoka Y."/>
            <person name="Urade Y."/>
            <person name="Hayaishi O."/>
        </authorList>
    </citation>
    <scope>FUNCTION</scope>
    <scope>CATALYTIC ACTIVITY</scope>
    <scope>COFACTOR</scope>
    <scope>SUBCELLULAR LOCATION</scope>
    <scope>TISSUE SPECIFICITY</scope>
    <source>
        <tissue>Megakaryocyte</tissue>
    </source>
</reference>
<reference key="9">
    <citation type="journal article" date="2002" name="J. Biol. Chem.">
        <title>Metabolism of the endocannabinoids, 2-arachidonylglycerol and anandamide, into prostaglandin, thromboxane, and prostacyclin glycerol esters and ethanolamides.</title>
        <authorList>
            <person name="Kozak K.R."/>
            <person name="Crews B.C."/>
            <person name="Morrow J.D."/>
            <person name="Wang L.H."/>
            <person name="Ma Y.H."/>
            <person name="Weinander R."/>
            <person name="Jakobsson P.J."/>
            <person name="Marnett L.J."/>
        </authorList>
    </citation>
    <scope>CATALYTIC ACTIVITY</scope>
</reference>
<reference key="10">
    <citation type="journal article" date="2003" name="Nat. Struct. Biol.">
        <title>Mechanism of metal activation of human hematopoietic prostaglandin D synthase.</title>
        <authorList>
            <person name="Inoue T."/>
            <person name="Irikura D."/>
            <person name="Okazaki N."/>
            <person name="Kinugasa S."/>
            <person name="Matsumura H."/>
            <person name="Uodome N."/>
            <person name="Yamamoto M."/>
            <person name="Kumasaka T."/>
            <person name="Miyano M."/>
            <person name="Kai Y."/>
            <person name="Urade Y."/>
        </authorList>
    </citation>
    <scope>X-RAY CRYSTALLOGRAPHY (1.7 ANGSTROMS) IN COMPLEXES WITH CALCIUM IONS; MAGNESIUM IONS AND GLUTATHIONE</scope>
    <scope>FUNCTION</scope>
    <scope>CATALYTIC ACTIVITY</scope>
    <scope>ACTIVITY REGULATION</scope>
    <scope>SUBUNIT</scope>
    <scope>BIOPHYSICOCHEMICAL PROPERTIES</scope>
    <scope>MUTAGENESIS OF ASP-93; ASP-96 AND ASP-97</scope>
</reference>
<reference key="11">
    <citation type="journal article" date="2004" name="J. Biochem.">
        <title>First determination of the inhibitor complex structure of human hematopoietic prostaglandin D synthase.</title>
        <authorList>
            <person name="Inoue T."/>
            <person name="Okano Y."/>
            <person name="Kado Y."/>
            <person name="Aritake K."/>
            <person name="Irikura D."/>
            <person name="Uodome N."/>
            <person name="Okazaki N."/>
            <person name="Kinugasa S."/>
            <person name="Shishitani H."/>
            <person name="Matsumura H."/>
            <person name="Kai Y."/>
            <person name="Urade Y."/>
        </authorList>
    </citation>
    <scope>X-RAY CRYSTALLOGRAPHY (1.9 ANGSTROMS) IN COMPLEX WITH GLUTATHIONE; MAGNESIUM IONS AND THE SYNTHETIC INHIBITOR BSBT</scope>
    <scope>FUNCTION</scope>
    <scope>SUBUNIT</scope>
    <scope>CATALYTIC ACTIVITY</scope>
    <scope>BIOPHYSICOCHEMICAL PROPERTIES</scope>
</reference>
<reference key="12">
    <citation type="journal article" date="2006" name="J. Biol. Chem.">
        <title>Structural and functional characterization of HQL-79, an orally selective inhibitor of human hematopoietic prostaglandin D synthase.</title>
        <authorList>
            <person name="Aritake K."/>
            <person name="Kado Y."/>
            <person name="Inoue T."/>
            <person name="Miyano M."/>
            <person name="Urade Y."/>
        </authorList>
    </citation>
    <scope>X-RAY CRYSTALLOGRAPHY (1.45 ANGSTROMS) IN COMPLEX WITH GLUTATHIONE; MAGNESIUM IONS AND THE SYNTHETIC INHIBITOR HQL-79</scope>
    <scope>FUNCTION</scope>
    <scope>CATALYTIC ACTIVITY</scope>
</reference>
<reference key="13">
    <citation type="journal article" date="2008" name="J. Med. Chem.">
        <title>Novel prostaglandin D synthase inhibitors generated by fragment-based drug design.</title>
        <authorList>
            <person name="Hohwy M."/>
            <person name="Spadola L."/>
            <person name="Lundquist B."/>
            <person name="Hawtin P."/>
            <person name="Dahmen J."/>
            <person name="Groth-Clausen I."/>
            <person name="Nilsson E."/>
            <person name="Persdotter S."/>
            <person name="von Wachenfeldt K."/>
            <person name="Folmer R.H."/>
            <person name="Edman K."/>
        </authorList>
    </citation>
    <scope>X-RAY CRYSTALLOGRAPHY (2.2 ANGSTROMS) IN COMPLEXES WITH GLUTATHIONE AND SYNTHETIC INHIBITORS</scope>
    <scope>SUBUNIT</scope>
</reference>
<reference key="14">
    <citation type="journal article" date="2010" name="Eur. J. Med. Chem.">
        <title>Identification and characterisation of new inhibitors for the human hematopoietic prostaglandin D2 synthase.</title>
        <authorList>
            <person name="Weber J.E."/>
            <person name="Oakley A.J."/>
            <person name="Christ A.N."/>
            <person name="Clark A.G."/>
            <person name="Hayes J.D."/>
            <person name="Hall R."/>
            <person name="Hume D.A."/>
            <person name="Board P.G."/>
            <person name="Smythe M.L."/>
            <person name="Flanagan J.U."/>
        </authorList>
    </citation>
    <scope>X-RAY CRYSTALLOGRAPHY (1.91 ANGSTROMS) IN COMPLEX WITH GLUTATHIONE AND SYNTHETIC INHIBITOR</scope>
    <scope>CATALYTIC ACTIVITY</scope>
    <scope>FUNCTION</scope>
</reference>
<proteinExistence type="evidence at protein level"/>
<accession>O60760</accession>
<accession>Q6FHT9</accession>
<dbReference type="EC" id="5.3.99.2" evidence="1 2 4 6 8 9 10"/>
<dbReference type="EC" id="2.5.1.18" evidence="1 2 5"/>
<dbReference type="EMBL" id="D82073">
    <property type="protein sequence ID" value="BAA25545.1"/>
    <property type="molecule type" value="mRNA"/>
</dbReference>
<dbReference type="EMBL" id="AB008830">
    <property type="protein sequence ID" value="BAA96854.1"/>
    <property type="molecule type" value="Genomic_DNA"/>
</dbReference>
<dbReference type="EMBL" id="AK290075">
    <property type="protein sequence ID" value="BAF82764.1"/>
    <property type="molecule type" value="mRNA"/>
</dbReference>
<dbReference type="EMBL" id="CR541662">
    <property type="protein sequence ID" value="CAG46463.1"/>
    <property type="molecule type" value="mRNA"/>
</dbReference>
<dbReference type="EMBL" id="CR541679">
    <property type="protein sequence ID" value="CAG46480.1"/>
    <property type="molecule type" value="mRNA"/>
</dbReference>
<dbReference type="EMBL" id="CH471057">
    <property type="protein sequence ID" value="EAX06052.1"/>
    <property type="molecule type" value="Genomic_DNA"/>
</dbReference>
<dbReference type="EMBL" id="BC020734">
    <property type="protein sequence ID" value="AAH20734.1"/>
    <property type="molecule type" value="mRNA"/>
</dbReference>
<dbReference type="CCDS" id="CCDS3640.1"/>
<dbReference type="RefSeq" id="NP_055300.1">
    <property type="nucleotide sequence ID" value="NM_014485.3"/>
</dbReference>
<dbReference type="PDB" id="1IYH">
    <property type="method" value="X-ray"/>
    <property type="resolution" value="1.70 A"/>
    <property type="chains" value="A/B/C/D=2-199"/>
</dbReference>
<dbReference type="PDB" id="1IYI">
    <property type="method" value="X-ray"/>
    <property type="resolution" value="1.80 A"/>
    <property type="chains" value="A/B/C/D=2-199"/>
</dbReference>
<dbReference type="PDB" id="1V40">
    <property type="method" value="X-ray"/>
    <property type="resolution" value="1.90 A"/>
    <property type="chains" value="A/B/C/D=2-199"/>
</dbReference>
<dbReference type="PDB" id="2CVD">
    <property type="method" value="X-ray"/>
    <property type="resolution" value="1.45 A"/>
    <property type="chains" value="A/B/C/D=2-199"/>
</dbReference>
<dbReference type="PDB" id="2VCQ">
    <property type="method" value="X-ray"/>
    <property type="resolution" value="1.95 A"/>
    <property type="chains" value="A/B/C/D=1-199"/>
</dbReference>
<dbReference type="PDB" id="2VCW">
    <property type="method" value="X-ray"/>
    <property type="resolution" value="1.95 A"/>
    <property type="chains" value="A/B/C/D=1-199"/>
</dbReference>
<dbReference type="PDB" id="2VCX">
    <property type="method" value="X-ray"/>
    <property type="resolution" value="2.10 A"/>
    <property type="chains" value="A/B/C/D=1-199"/>
</dbReference>
<dbReference type="PDB" id="2VCZ">
    <property type="method" value="X-ray"/>
    <property type="resolution" value="1.95 A"/>
    <property type="chains" value="A/B/C/D=1-199"/>
</dbReference>
<dbReference type="PDB" id="2VD0">
    <property type="method" value="X-ray"/>
    <property type="resolution" value="2.20 A"/>
    <property type="chains" value="A/B/C/D=1-199"/>
</dbReference>
<dbReference type="PDB" id="2VD1">
    <property type="method" value="X-ray"/>
    <property type="resolution" value="2.25 A"/>
    <property type="chains" value="A/B/C/D=1-199"/>
</dbReference>
<dbReference type="PDB" id="3EE2">
    <property type="method" value="X-ray"/>
    <property type="resolution" value="1.91 A"/>
    <property type="chains" value="A/B=1-199"/>
</dbReference>
<dbReference type="PDB" id="3KXO">
    <property type="method" value="X-ray"/>
    <property type="resolution" value="2.10 A"/>
    <property type="chains" value="A/B=1-199"/>
</dbReference>
<dbReference type="PDB" id="3VI5">
    <property type="method" value="X-ray"/>
    <property type="resolution" value="2.00 A"/>
    <property type="chains" value="A/B/C/D=2-199"/>
</dbReference>
<dbReference type="PDB" id="3VI7">
    <property type="method" value="X-ray"/>
    <property type="resolution" value="2.00 A"/>
    <property type="chains" value="A/B/C/D=2-199"/>
</dbReference>
<dbReference type="PDB" id="4EC0">
    <property type="method" value="X-ray"/>
    <property type="resolution" value="1.85 A"/>
    <property type="chains" value="A/B=1-199"/>
</dbReference>
<dbReference type="PDB" id="4EDY">
    <property type="method" value="X-ray"/>
    <property type="resolution" value="1.72 A"/>
    <property type="chains" value="A/B=2-199"/>
</dbReference>
<dbReference type="PDB" id="4EDZ">
    <property type="method" value="X-ray"/>
    <property type="resolution" value="2.00 A"/>
    <property type="chains" value="A/B/C/D=2-199"/>
</dbReference>
<dbReference type="PDB" id="4EE0">
    <property type="method" value="X-ray"/>
    <property type="resolution" value="1.75 A"/>
    <property type="chains" value="A/B=2-199"/>
</dbReference>
<dbReference type="PDB" id="5AIS">
    <property type="method" value="X-ray"/>
    <property type="resolution" value="1.85 A"/>
    <property type="chains" value="A/B/C/D=2-199"/>
</dbReference>
<dbReference type="PDB" id="5AIV">
    <property type="method" value="X-ray"/>
    <property type="resolution" value="2.04 A"/>
    <property type="chains" value="A/B/C/D=2-199"/>
</dbReference>
<dbReference type="PDB" id="5AIX">
    <property type="method" value="X-ray"/>
    <property type="resolution" value="2.10 A"/>
    <property type="chains" value="A/B/C/D=2-199"/>
</dbReference>
<dbReference type="PDB" id="5YWE">
    <property type="method" value="X-ray"/>
    <property type="resolution" value="1.68 A"/>
    <property type="chains" value="A/B/C/D=2-199"/>
</dbReference>
<dbReference type="PDB" id="5YWX">
    <property type="method" value="X-ray"/>
    <property type="resolution" value="1.74 A"/>
    <property type="chains" value="A/B/C/D=2-199"/>
</dbReference>
<dbReference type="PDB" id="5YX1">
    <property type="method" value="X-ray"/>
    <property type="resolution" value="1.39 A"/>
    <property type="chains" value="A/B/C/D=2-199"/>
</dbReference>
<dbReference type="PDB" id="6N4E">
    <property type="method" value="X-ray"/>
    <property type="resolution" value="1.65 A"/>
    <property type="chains" value="A=1-199"/>
</dbReference>
<dbReference type="PDB" id="6W58">
    <property type="method" value="X-ray"/>
    <property type="resolution" value="2.40 A"/>
    <property type="chains" value="A/B=1-199"/>
</dbReference>
<dbReference type="PDB" id="6W8H">
    <property type="method" value="X-ray"/>
    <property type="resolution" value="1.97 A"/>
    <property type="chains" value="A/C=1-199"/>
</dbReference>
<dbReference type="PDB" id="6ZTC">
    <property type="method" value="X-ray"/>
    <property type="resolution" value="1.84 A"/>
    <property type="chains" value="A/B=1-199"/>
</dbReference>
<dbReference type="PDB" id="7JR6">
    <property type="method" value="X-ray"/>
    <property type="resolution" value="1.88 A"/>
    <property type="chains" value="A/B=1-199"/>
</dbReference>
<dbReference type="PDB" id="7JR8">
    <property type="method" value="X-ray"/>
    <property type="resolution" value="1.13 A"/>
    <property type="chains" value="A/B=1-199"/>
</dbReference>
<dbReference type="PDBsum" id="1IYH"/>
<dbReference type="PDBsum" id="1IYI"/>
<dbReference type="PDBsum" id="1V40"/>
<dbReference type="PDBsum" id="2CVD"/>
<dbReference type="PDBsum" id="2VCQ"/>
<dbReference type="PDBsum" id="2VCW"/>
<dbReference type="PDBsum" id="2VCX"/>
<dbReference type="PDBsum" id="2VCZ"/>
<dbReference type="PDBsum" id="2VD0"/>
<dbReference type="PDBsum" id="2VD1"/>
<dbReference type="PDBsum" id="3EE2"/>
<dbReference type="PDBsum" id="3KXO"/>
<dbReference type="PDBsum" id="3VI5"/>
<dbReference type="PDBsum" id="3VI7"/>
<dbReference type="PDBsum" id="4EC0"/>
<dbReference type="PDBsum" id="4EDY"/>
<dbReference type="PDBsum" id="4EDZ"/>
<dbReference type="PDBsum" id="4EE0"/>
<dbReference type="PDBsum" id="5AIS"/>
<dbReference type="PDBsum" id="5AIV"/>
<dbReference type="PDBsum" id="5AIX"/>
<dbReference type="PDBsum" id="5YWE"/>
<dbReference type="PDBsum" id="5YWX"/>
<dbReference type="PDBsum" id="5YX1"/>
<dbReference type="PDBsum" id="6N4E"/>
<dbReference type="PDBsum" id="6W58"/>
<dbReference type="PDBsum" id="6W8H"/>
<dbReference type="PDBsum" id="6ZTC"/>
<dbReference type="PDBsum" id="7JR6"/>
<dbReference type="PDBsum" id="7JR8"/>
<dbReference type="SMR" id="O60760"/>
<dbReference type="BioGRID" id="118128">
    <property type="interactions" value="8"/>
</dbReference>
<dbReference type="FunCoup" id="O60760">
    <property type="interactions" value="321"/>
</dbReference>
<dbReference type="IntAct" id="O60760">
    <property type="interactions" value="7"/>
</dbReference>
<dbReference type="STRING" id="9606.ENSP00000295256"/>
<dbReference type="BindingDB" id="O60760"/>
<dbReference type="ChEMBL" id="CHEMBL5879"/>
<dbReference type="DrugBank" id="DB08790">
    <property type="generic name" value="1-PHENYL-1H-PYRAZOLE-4-CARBOXYLIC ACID"/>
</dbReference>
<dbReference type="DrugBank" id="DB01897">
    <property type="generic name" value="2-(2f-Benzothiazolyl)-5-Styryl-3-(4f-Phthalhydrazidyl)Tetrazolium Chloride"/>
</dbReference>
<dbReference type="DrugBank" id="DB08695">
    <property type="generic name" value="3-(4-nitrophenyl)-1H-pyrazole"/>
</dbReference>
<dbReference type="DrugBank" id="DB07613">
    <property type="generic name" value="3-phenyl-5-(1H-pyrazol-3-yl)isoxazole"/>
</dbReference>
<dbReference type="DrugBank" id="DB07917">
    <property type="generic name" value="4-(BENZHYDRYLOXY)-1-[3-(1H-TETRAAZOL-5-YL)PROPYL]PIPERIDINE"/>
</dbReference>
<dbReference type="DrugBank" id="DB07616">
    <property type="generic name" value="4-{[4-(4-fluoro-3-methylphenyl)-1,3-thiazol-2-yl]amino}-2-hydroxybenzoic acid"/>
</dbReference>
<dbReference type="DrugBank" id="DB06622">
    <property type="generic name" value="7-beta-Hydroxyepiandrosterone"/>
</dbReference>
<dbReference type="DrugBank" id="DB00321">
    <property type="generic name" value="Amitriptyline"/>
</dbReference>
<dbReference type="DrugBank" id="DB00291">
    <property type="generic name" value="Chlorambucil"/>
</dbReference>
<dbReference type="DrugBank" id="DB02633">
    <property type="generic name" value="Cibacron Blue"/>
</dbReference>
<dbReference type="DrugBank" id="DB03619">
    <property type="generic name" value="Deoxycholic acid"/>
</dbReference>
<dbReference type="DrugBank" id="DB01942">
    <property type="generic name" value="Formic acid"/>
</dbReference>
<dbReference type="DrugBank" id="DB00143">
    <property type="generic name" value="Glutathione"/>
</dbReference>
<dbReference type="DrugBank" id="DB03310">
    <property type="generic name" value="Glutathione disulfide"/>
</dbReference>
<dbReference type="DrugBank" id="DB08313">
    <property type="generic name" value="Nocodazole"/>
</dbReference>
<dbReference type="DrugBank" id="DB07614">
    <property type="generic name" value="PHENYL-5-(1H-PYRAZOL-3-YL)-1,3-THIAZOLE"/>
</dbReference>
<dbReference type="DrugBank" id="DB01058">
    <property type="generic name" value="Praziquantel"/>
</dbReference>
<dbReference type="DrugBank" id="DB02285">
    <property type="generic name" value="Protoporphyrin"/>
</dbReference>
<dbReference type="DrugBank" id="DB04132">
    <property type="generic name" value="S-Hexylglutathione"/>
</dbReference>
<dbReference type="DrugBank" id="DB07615">
    <property type="generic name" value="Tranilast"/>
</dbReference>
<dbReference type="DrugCentral" id="O60760"/>
<dbReference type="GuidetoPHARMACOLOGY" id="1381"/>
<dbReference type="SwissLipids" id="SLP:000000828"/>
<dbReference type="GlyGen" id="O60760">
    <property type="glycosylation" value="1 site, 1 O-linked glycan (1 site)"/>
</dbReference>
<dbReference type="iPTMnet" id="O60760"/>
<dbReference type="PhosphoSitePlus" id="O60760"/>
<dbReference type="BioMuta" id="HPGDS"/>
<dbReference type="MassIVE" id="O60760"/>
<dbReference type="PaxDb" id="9606-ENSP00000295256"/>
<dbReference type="PeptideAtlas" id="O60760"/>
<dbReference type="ProteomicsDB" id="49588"/>
<dbReference type="Antibodypedia" id="14738">
    <property type="antibodies" value="110 antibodies from 27 providers"/>
</dbReference>
<dbReference type="DNASU" id="27306"/>
<dbReference type="Ensembl" id="ENST00000295256.10">
    <property type="protein sequence ID" value="ENSP00000295256.5"/>
    <property type="gene ID" value="ENSG00000163106.11"/>
</dbReference>
<dbReference type="GeneID" id="27306"/>
<dbReference type="KEGG" id="hsa:27306"/>
<dbReference type="MANE-Select" id="ENST00000295256.10">
    <property type="protein sequence ID" value="ENSP00000295256.5"/>
    <property type="RefSeq nucleotide sequence ID" value="NM_014485.3"/>
    <property type="RefSeq protein sequence ID" value="NP_055300.1"/>
</dbReference>
<dbReference type="UCSC" id="uc003hte.2">
    <property type="organism name" value="human"/>
</dbReference>
<dbReference type="AGR" id="HGNC:17890"/>
<dbReference type="CTD" id="27306"/>
<dbReference type="DisGeNET" id="27306"/>
<dbReference type="GeneCards" id="HPGDS"/>
<dbReference type="HGNC" id="HGNC:17890">
    <property type="gene designation" value="HPGDS"/>
</dbReference>
<dbReference type="HPA" id="ENSG00000163106">
    <property type="expression patterns" value="Tissue enhanced (placenta)"/>
</dbReference>
<dbReference type="MIM" id="602598">
    <property type="type" value="gene"/>
</dbReference>
<dbReference type="neXtProt" id="NX_O60760"/>
<dbReference type="OpenTargets" id="ENSG00000163106"/>
<dbReference type="PharmGKB" id="PA165664133"/>
<dbReference type="VEuPathDB" id="HostDB:ENSG00000163106"/>
<dbReference type="eggNOG" id="KOG1695">
    <property type="taxonomic scope" value="Eukaryota"/>
</dbReference>
<dbReference type="GeneTree" id="ENSGT00940000160278"/>
<dbReference type="HOGENOM" id="CLU_039475_1_0_1"/>
<dbReference type="InParanoid" id="O60760"/>
<dbReference type="OMA" id="TEMEQCH"/>
<dbReference type="OrthoDB" id="414243at2759"/>
<dbReference type="PAN-GO" id="O60760">
    <property type="GO annotations" value="2 GO annotations based on evolutionary models"/>
</dbReference>
<dbReference type="PhylomeDB" id="O60760"/>
<dbReference type="TreeFam" id="TF105321"/>
<dbReference type="BioCyc" id="MetaCyc:HS08788-MONOMER"/>
<dbReference type="BRENDA" id="2.5.1.18">
    <property type="organism ID" value="2681"/>
</dbReference>
<dbReference type="BRENDA" id="5.3.99.2">
    <property type="organism ID" value="2681"/>
</dbReference>
<dbReference type="PathwayCommons" id="O60760"/>
<dbReference type="Reactome" id="R-HSA-156590">
    <property type="pathway name" value="Glutathione conjugation"/>
</dbReference>
<dbReference type="Reactome" id="R-HSA-2162123">
    <property type="pathway name" value="Synthesis of Prostaglandins (PG) and Thromboxanes (TX)"/>
</dbReference>
<dbReference type="SABIO-RK" id="O60760"/>
<dbReference type="SignaLink" id="O60760"/>
<dbReference type="BioGRID-ORCS" id="27306">
    <property type="hits" value="11 hits in 1117 CRISPR screens"/>
</dbReference>
<dbReference type="ChiTaRS" id="HPGDS">
    <property type="organism name" value="human"/>
</dbReference>
<dbReference type="EvolutionaryTrace" id="O60760"/>
<dbReference type="GeneWiki" id="PGDS"/>
<dbReference type="GenomeRNAi" id="27306"/>
<dbReference type="Pharos" id="O60760">
    <property type="development level" value="Tchem"/>
</dbReference>
<dbReference type="PRO" id="PR:O60760"/>
<dbReference type="Proteomes" id="UP000005640">
    <property type="component" value="Chromosome 4"/>
</dbReference>
<dbReference type="RNAct" id="O60760">
    <property type="molecule type" value="protein"/>
</dbReference>
<dbReference type="Bgee" id="ENSG00000163106">
    <property type="expression patterns" value="Expressed in male germ line stem cell (sensu Vertebrata) in testis and 149 other cell types or tissues"/>
</dbReference>
<dbReference type="ExpressionAtlas" id="O60760">
    <property type="expression patterns" value="baseline and differential"/>
</dbReference>
<dbReference type="GO" id="GO:0005737">
    <property type="term" value="C:cytoplasm"/>
    <property type="evidence" value="ECO:0000304"/>
    <property type="project" value="ProtInc"/>
</dbReference>
<dbReference type="GO" id="GO:0005829">
    <property type="term" value="C:cytosol"/>
    <property type="evidence" value="ECO:0000314"/>
    <property type="project" value="HPA"/>
</dbReference>
<dbReference type="GO" id="GO:0043231">
    <property type="term" value="C:intracellular membrane-bounded organelle"/>
    <property type="evidence" value="ECO:0000314"/>
    <property type="project" value="HPA"/>
</dbReference>
<dbReference type="GO" id="GO:0005654">
    <property type="term" value="C:nucleoplasm"/>
    <property type="evidence" value="ECO:0000314"/>
    <property type="project" value="HPA"/>
</dbReference>
<dbReference type="GO" id="GO:0005509">
    <property type="term" value="F:calcium ion binding"/>
    <property type="evidence" value="ECO:0000314"/>
    <property type="project" value="UniProtKB"/>
</dbReference>
<dbReference type="GO" id="GO:0004364">
    <property type="term" value="F:glutathione transferase activity"/>
    <property type="evidence" value="ECO:0000318"/>
    <property type="project" value="GO_Central"/>
</dbReference>
<dbReference type="GO" id="GO:0000287">
    <property type="term" value="F:magnesium ion binding"/>
    <property type="evidence" value="ECO:0000314"/>
    <property type="project" value="UniProtKB"/>
</dbReference>
<dbReference type="GO" id="GO:0004667">
    <property type="term" value="F:prostaglandin-D synthase activity"/>
    <property type="evidence" value="ECO:0000314"/>
    <property type="project" value="UniProtKB"/>
</dbReference>
<dbReference type="GO" id="GO:0042803">
    <property type="term" value="F:protein homodimerization activity"/>
    <property type="evidence" value="ECO:0000353"/>
    <property type="project" value="UniProtKB"/>
</dbReference>
<dbReference type="GO" id="GO:0006749">
    <property type="term" value="P:glutathione metabolic process"/>
    <property type="evidence" value="ECO:0000318"/>
    <property type="project" value="GO_Central"/>
</dbReference>
<dbReference type="GO" id="GO:0007626">
    <property type="term" value="P:locomotory behavior"/>
    <property type="evidence" value="ECO:0000304"/>
    <property type="project" value="ProtInc"/>
</dbReference>
<dbReference type="GO" id="GO:2000255">
    <property type="term" value="P:negative regulation of male germ cell proliferation"/>
    <property type="evidence" value="ECO:0007669"/>
    <property type="project" value="Ensembl"/>
</dbReference>
<dbReference type="GO" id="GO:0001516">
    <property type="term" value="P:prostaglandin biosynthetic process"/>
    <property type="evidence" value="ECO:0007669"/>
    <property type="project" value="UniProtKB-KW"/>
</dbReference>
<dbReference type="GO" id="GO:0006693">
    <property type="term" value="P:prostaglandin metabolic process"/>
    <property type="evidence" value="ECO:0000314"/>
    <property type="project" value="UniProtKB"/>
</dbReference>
<dbReference type="GO" id="GO:0009624">
    <property type="term" value="P:response to nematode"/>
    <property type="evidence" value="ECO:0007669"/>
    <property type="project" value="Ensembl"/>
</dbReference>
<dbReference type="GO" id="GO:0010269">
    <property type="term" value="P:response to selenium ion"/>
    <property type="evidence" value="ECO:0007669"/>
    <property type="project" value="Ensembl"/>
</dbReference>
<dbReference type="GO" id="GO:0007165">
    <property type="term" value="P:signal transduction"/>
    <property type="evidence" value="ECO:0000303"/>
    <property type="project" value="ProtInc"/>
</dbReference>
<dbReference type="CDD" id="cd10295">
    <property type="entry name" value="GST_C_Sigma"/>
    <property type="match status" value="1"/>
</dbReference>
<dbReference type="CDD" id="cd03039">
    <property type="entry name" value="GST_N_Sigma_like"/>
    <property type="match status" value="1"/>
</dbReference>
<dbReference type="FunFam" id="1.20.1050.10:FF:000035">
    <property type="entry name" value="Hematopoietic prostaglandin D synthase"/>
    <property type="match status" value="1"/>
</dbReference>
<dbReference type="FunFam" id="3.40.30.10:FF:000035">
    <property type="entry name" value="hematopoietic prostaglandin D synthase"/>
    <property type="match status" value="1"/>
</dbReference>
<dbReference type="Gene3D" id="1.20.1050.10">
    <property type="match status" value="1"/>
</dbReference>
<dbReference type="Gene3D" id="3.40.30.10">
    <property type="entry name" value="Glutaredoxin"/>
    <property type="match status" value="1"/>
</dbReference>
<dbReference type="InterPro" id="IPR010987">
    <property type="entry name" value="Glutathione-S-Trfase_C-like"/>
</dbReference>
<dbReference type="InterPro" id="IPR036282">
    <property type="entry name" value="Glutathione-S-Trfase_C_sf"/>
</dbReference>
<dbReference type="InterPro" id="IPR004045">
    <property type="entry name" value="Glutathione_S-Trfase_N"/>
</dbReference>
<dbReference type="InterPro" id="IPR004046">
    <property type="entry name" value="GST_C"/>
</dbReference>
<dbReference type="InterPro" id="IPR050213">
    <property type="entry name" value="GST_superfamily"/>
</dbReference>
<dbReference type="InterPro" id="IPR036249">
    <property type="entry name" value="Thioredoxin-like_sf"/>
</dbReference>
<dbReference type="PANTHER" id="PTHR11571">
    <property type="entry name" value="GLUTATHIONE S-TRANSFERASE"/>
    <property type="match status" value="1"/>
</dbReference>
<dbReference type="PANTHER" id="PTHR11571:SF224">
    <property type="entry name" value="HEMATOPOIETIC PROSTAGLANDIN D SYNTHASE"/>
    <property type="match status" value="1"/>
</dbReference>
<dbReference type="Pfam" id="PF14497">
    <property type="entry name" value="GST_C_3"/>
    <property type="match status" value="1"/>
</dbReference>
<dbReference type="Pfam" id="PF02798">
    <property type="entry name" value="GST_N"/>
    <property type="match status" value="1"/>
</dbReference>
<dbReference type="SFLD" id="SFLDG01205">
    <property type="entry name" value="AMPS.1"/>
    <property type="match status" value="1"/>
</dbReference>
<dbReference type="SFLD" id="SFLDG00363">
    <property type="entry name" value="AMPS_(cytGST):_Alpha-__Mu-__Pi"/>
    <property type="match status" value="1"/>
</dbReference>
<dbReference type="SUPFAM" id="SSF47616">
    <property type="entry name" value="GST C-terminal domain-like"/>
    <property type="match status" value="1"/>
</dbReference>
<dbReference type="SUPFAM" id="SSF52833">
    <property type="entry name" value="Thioredoxin-like"/>
    <property type="match status" value="1"/>
</dbReference>
<dbReference type="PROSITE" id="PS50405">
    <property type="entry name" value="GST_CTER"/>
    <property type="match status" value="1"/>
</dbReference>
<dbReference type="PROSITE" id="PS50404">
    <property type="entry name" value="GST_NTER"/>
    <property type="match status" value="1"/>
</dbReference>
<sequence>MPNYKLTYFNMRGRAEIIRYIFAYLDIQYEDHRIEQADWPEIKSTLPFGKIPILEVDGLTLHQSLAIARYLTKNTDLAGNTEMEQCHVDAIVDTLDDFMSCFPWAEKKQDVKEQMFNELLTYNAPHLMQDLDTYLGGREWLIGNSVTWADFYWEICSTTLLVFKPDLLDNHPRLVTLRKKVQAIPAVANWIKRRPQTKL</sequence>
<gene>
    <name evidence="14" type="primary">HPGDS</name>
    <name type="synonym">GSTS</name>
    <name type="synonym">PGDS</name>
    <name type="synonym">PTGDS2</name>
</gene>
<keyword id="KW-0002">3D-structure</keyword>
<keyword id="KW-0106">Calcium</keyword>
<keyword id="KW-0963">Cytoplasm</keyword>
<keyword id="KW-0275">Fatty acid biosynthesis</keyword>
<keyword id="KW-0276">Fatty acid metabolism</keyword>
<keyword id="KW-0413">Isomerase</keyword>
<keyword id="KW-0444">Lipid biosynthesis</keyword>
<keyword id="KW-0443">Lipid metabolism</keyword>
<keyword id="KW-0460">Magnesium</keyword>
<keyword id="KW-0479">Metal-binding</keyword>
<keyword id="KW-0643">Prostaglandin biosynthesis</keyword>
<keyword id="KW-0644">Prostaglandin metabolism</keyword>
<keyword id="KW-1267">Proteomics identification</keyword>
<keyword id="KW-1185">Reference proteome</keyword>
<keyword id="KW-0808">Transferase</keyword>
<feature type="chain" id="PRO_0000185934" description="Hematopoietic prostaglandin D synthase">
    <location>
        <begin position="1"/>
        <end position="199"/>
    </location>
</feature>
<feature type="domain" description="GST N-terminal">
    <location>
        <begin position="2"/>
        <end position="79"/>
    </location>
</feature>
<feature type="domain" description="GST C-terminal">
    <location>
        <begin position="81"/>
        <end position="199"/>
    </location>
</feature>
<feature type="binding site" evidence="4 5 6 7 8">
    <location>
        <position position="8"/>
    </location>
    <ligand>
        <name>glutathione</name>
        <dbReference type="ChEBI" id="CHEBI:57925"/>
    </ligand>
</feature>
<feature type="binding site" evidence="4 5 6 7 8">
    <location>
        <position position="14"/>
    </location>
    <ligand>
        <name>glutathione</name>
        <dbReference type="ChEBI" id="CHEBI:57925"/>
    </ligand>
</feature>
<feature type="binding site" evidence="4 5 6 7 8">
    <location>
        <position position="39"/>
    </location>
    <ligand>
        <name>glutathione</name>
        <dbReference type="ChEBI" id="CHEBI:57925"/>
    </ligand>
</feature>
<feature type="binding site" evidence="4 5 6 7 8">
    <location>
        <begin position="49"/>
        <end position="51"/>
    </location>
    <ligand>
        <name>glutathione</name>
        <dbReference type="ChEBI" id="CHEBI:57925"/>
    </ligand>
</feature>
<feature type="binding site" evidence="4 5 6 7 8">
    <location>
        <begin position="63"/>
        <end position="64"/>
    </location>
    <ligand>
        <name>glutathione</name>
        <dbReference type="ChEBI" id="CHEBI:57925"/>
    </ligand>
</feature>
<feature type="mutagenesis site" description="Loss of activation by calcium or magnesium ions." evidence="4">
    <original>D</original>
    <variation>N</variation>
    <location>
        <position position="93"/>
    </location>
</feature>
<feature type="mutagenesis site" description="Increases PGD2 synthesis. Loss of activation by calcium or magnesium ions." evidence="4">
    <original>D</original>
    <variation>N</variation>
    <location>
        <position position="96"/>
    </location>
</feature>
<feature type="mutagenesis site" description="Reduces PGD2 synthesis by 99%. Loss of activation by calcium or magnesium ions." evidence="4">
    <original>D</original>
    <variation>N</variation>
    <location>
        <position position="97"/>
    </location>
</feature>
<feature type="sequence conflict" description="In Ref. 2; no nucleotide entry." evidence="11" ref="2">
    <original>V</original>
    <variation>I</variation>
    <location>
        <position position="187"/>
    </location>
</feature>
<feature type="strand" evidence="16">
    <location>
        <begin position="4"/>
        <end position="12"/>
    </location>
</feature>
<feature type="helix" evidence="16">
    <location>
        <begin position="13"/>
        <end position="15"/>
    </location>
</feature>
<feature type="helix" evidence="16">
    <location>
        <begin position="16"/>
        <end position="24"/>
    </location>
</feature>
<feature type="strand" evidence="16">
    <location>
        <begin position="30"/>
        <end position="34"/>
    </location>
</feature>
<feature type="helix" evidence="16">
    <location>
        <begin position="36"/>
        <end position="38"/>
    </location>
</feature>
<feature type="helix" evidence="16">
    <location>
        <begin position="39"/>
        <end position="42"/>
    </location>
</feature>
<feature type="helix" evidence="16">
    <location>
        <begin position="43"/>
        <end position="45"/>
    </location>
</feature>
<feature type="strand" evidence="16">
    <location>
        <begin position="46"/>
        <end position="49"/>
    </location>
</feature>
<feature type="strand" evidence="16">
    <location>
        <begin position="53"/>
        <end position="56"/>
    </location>
</feature>
<feature type="strand" evidence="16">
    <location>
        <begin position="59"/>
        <end position="62"/>
    </location>
</feature>
<feature type="helix" evidence="16">
    <location>
        <begin position="64"/>
        <end position="72"/>
    </location>
</feature>
<feature type="helix" evidence="15">
    <location>
        <begin position="76"/>
        <end position="78"/>
    </location>
</feature>
<feature type="helix" evidence="16">
    <location>
        <begin position="82"/>
        <end position="101"/>
    </location>
</feature>
<feature type="helix" evidence="16">
    <location>
        <begin position="109"/>
        <end position="122"/>
    </location>
</feature>
<feature type="helix" evidence="16">
    <location>
        <begin position="124"/>
        <end position="135"/>
    </location>
</feature>
<feature type="strand" evidence="16">
    <location>
        <begin position="139"/>
        <end position="142"/>
    </location>
</feature>
<feature type="helix" evidence="16">
    <location>
        <begin position="148"/>
        <end position="163"/>
    </location>
</feature>
<feature type="turn" evidence="16">
    <location>
        <begin position="165"/>
        <end position="170"/>
    </location>
</feature>
<feature type="helix" evidence="16">
    <location>
        <begin position="172"/>
        <end position="183"/>
    </location>
</feature>
<feature type="helix" evidence="16">
    <location>
        <begin position="185"/>
        <end position="193"/>
    </location>
</feature>
<name>HPGDS_HUMAN</name>
<organism>
    <name type="scientific">Homo sapiens</name>
    <name type="common">Human</name>
    <dbReference type="NCBI Taxonomy" id="9606"/>
    <lineage>
        <taxon>Eukaryota</taxon>
        <taxon>Metazoa</taxon>
        <taxon>Chordata</taxon>
        <taxon>Craniata</taxon>
        <taxon>Vertebrata</taxon>
        <taxon>Euteleostomi</taxon>
        <taxon>Mammalia</taxon>
        <taxon>Eutheria</taxon>
        <taxon>Euarchontoglires</taxon>
        <taxon>Primates</taxon>
        <taxon>Haplorrhini</taxon>
        <taxon>Catarrhini</taxon>
        <taxon>Hominidae</taxon>
        <taxon>Homo</taxon>
    </lineage>
</organism>
<comment type="function">
    <text evidence="1 2 3 4 5 6 8 9 10">Bifunctional enzyme which catalyzes both the conversion of PGH2 to PGD2, a prostaglandin involved in smooth muscle contraction/relaxation and a potent inhibitor of platelet aggregation, and the conjugation of glutathione with a wide range of aryl halides and organic isothiocyanates. Also exhibits low glutathione-peroxidase activity towards cumene hydroperoxide.</text>
</comment>
<comment type="catalytic activity">
    <reaction evidence="1 2 3 4 6 8 9 10">
        <text>prostaglandin H2 = prostaglandin D2</text>
        <dbReference type="Rhea" id="RHEA:10600"/>
        <dbReference type="ChEBI" id="CHEBI:57405"/>
        <dbReference type="ChEBI" id="CHEBI:57406"/>
        <dbReference type="EC" id="5.3.99.2"/>
    </reaction>
    <physiologicalReaction direction="left-to-right" evidence="12 13">
        <dbReference type="Rhea" id="RHEA:10601"/>
    </physiologicalReaction>
</comment>
<comment type="catalytic activity">
    <reaction evidence="1 2 5">
        <text>RX + glutathione = an S-substituted glutathione + a halide anion + H(+)</text>
        <dbReference type="Rhea" id="RHEA:16437"/>
        <dbReference type="ChEBI" id="CHEBI:15378"/>
        <dbReference type="ChEBI" id="CHEBI:16042"/>
        <dbReference type="ChEBI" id="CHEBI:17792"/>
        <dbReference type="ChEBI" id="CHEBI:57925"/>
        <dbReference type="ChEBI" id="CHEBI:90779"/>
        <dbReference type="EC" id="2.5.1.18"/>
    </reaction>
</comment>
<comment type="catalytic activity">
    <reaction evidence="3">
        <text>2-glyceryl-prostaglandin H2 = 2-glyceryl-prostaglandin D2</text>
        <dbReference type="Rhea" id="RHEA:51232"/>
        <dbReference type="ChEBI" id="CHEBI:85166"/>
        <dbReference type="ChEBI" id="CHEBI:133979"/>
    </reaction>
    <physiologicalReaction direction="left-to-right" evidence="13">
        <dbReference type="Rhea" id="RHEA:51233"/>
    </physiologicalReaction>
</comment>
<comment type="cofactor">
    <cofactor evidence="1 2 9 10">
        <name>glutathione</name>
        <dbReference type="ChEBI" id="CHEBI:57925"/>
    </cofactor>
    <text evidence="1 2 9 10">Glutathione is required for the prostaglandin D synthase activity.</text>
</comment>
<comment type="activity regulation">
    <text evidence="4">Prostaglandin PGD2 synthesis is stimulated by calcium and magnesium ions. One calcium or magnesium ion is bound between the subunits of the homodimer. The interactions with the protein are for the most part mediated via water molecules. Magnesium increases the affinity for glutathione, while calcium has no effect on the affinity for glutathione.</text>
</comment>
<comment type="biophysicochemical properties">
    <kinetics>
        <KM evidence="2 4 5">8 mM for glutathione for the glutathione-conjugating activity</KM>
        <KM evidence="2 4 5">0.6 mM for glutathione for the prostaglandin D synthase activity in the presence of EDTA</KM>
        <KM evidence="2 4 5">0.14 mM for glutathione for the prostaglandin D synthase activity in the presence of magnesium ions</KM>
        <Vmax evidence="2 4 5">8.6 umol/min/mg enzyme with 1-bromo-2,4-dinitrobenzene as substrate</Vmax>
        <Vmax evidence="2 4 5">5.1 umol/min/mg enzyme with 1-chloro-2,4-dinitrobenzene as substrate</Vmax>
        <Vmax evidence="2 4 5">44.3 umol/min/mg enzyme with 1-fluoro-2,4-dinitrobenzene as substrate</Vmax>
        <Vmax evidence="2 4 5">10.7 umol/min/mg enzyme with 1-iodo-2,4-dinitrobenzene as substrate</Vmax>
        <Vmax evidence="2 4 5">6.8 umol/min/mg enzyme with allyl isothiocyanate as substrate</Vmax>
        <Vmax evidence="2 4 5">6.3 umol/min/mg enzyme with benzyl isothiocyanate as substrate</Vmax>
        <Vmax evidence="2 4 5">0.05 umol/min/mg enzyme with cumene hydroperoxide as substrate</Vmax>
    </kinetics>
</comment>
<comment type="subunit">
    <text evidence="4 5 6 7 8">Homodimer.</text>
</comment>
<comment type="interaction">
    <interactant intactId="EBI-10187349">
        <id>O60760</id>
    </interactant>
    <interactant intactId="EBI-2870273">
        <id>Q96GS6</id>
        <label>ABHD17A</label>
    </interactant>
    <organismsDiffer>false</organismsDiffer>
    <experiments>4</experiments>
</comment>
<comment type="interaction">
    <interactant intactId="EBI-10187349">
        <id>O60760</id>
    </interactant>
    <interactant intactId="EBI-2875665">
        <id>Q96B67</id>
        <label>ARRDC3</label>
    </interactant>
    <organismsDiffer>false</organismsDiffer>
    <experiments>9</experiments>
</comment>
<comment type="interaction">
    <interactant intactId="EBI-10187349">
        <id>O60760</id>
    </interactant>
    <interactant intactId="EBI-1037189">
        <id>P15018</id>
        <label>LIF</label>
    </interactant>
    <organismsDiffer>false</organismsDiffer>
    <experiments>3</experiments>
</comment>
<comment type="interaction">
    <interactant intactId="EBI-10187349">
        <id>O60760</id>
    </interactant>
    <interactant intactId="EBI-10195914">
        <id>P08582-2</id>
        <label>MELTF</label>
    </interactant>
    <organismsDiffer>false</organismsDiffer>
    <experiments>3</experiments>
</comment>
<comment type="interaction">
    <interactant intactId="EBI-10187349">
        <id>O60760</id>
    </interactant>
    <interactant intactId="EBI-6172856">
        <id>Q13370</id>
        <label>PDE3B</label>
    </interactant>
    <organismsDiffer>false</organismsDiffer>
    <experiments>3</experiments>
</comment>
<comment type="interaction">
    <interactant intactId="EBI-10187349">
        <id>O60760</id>
    </interactant>
    <interactant intactId="EBI-12182077">
        <id>Q8N1H7</id>
        <label>SIX6OS1</label>
    </interactant>
    <organismsDiffer>false</organismsDiffer>
    <experiments>3</experiments>
</comment>
<comment type="subcellular location">
    <subcellularLocation>
        <location evidence="9">Cytoplasm</location>
    </subcellularLocation>
</comment>
<comment type="tissue specificity">
    <text evidence="1 2 9 10">Expressed in a number of megakaryocytic cell lines but not in platelets. Highly expressed in adipose tissue, macrophages and placenta. Also expressed at lower levels in lung, heart, lymph nodes, appendix, bone marrow and fetal liver.</text>
</comment>
<comment type="developmental stage">
    <text evidence="10">Highest levels in immature megakaryocytic cells. Disappears after final differentiation to platelets.</text>
</comment>
<comment type="induction">
    <text evidence="10">By 12-O-tetradecanoylphorbol-13-acetate (TPA).</text>
</comment>
<comment type="similarity">
    <text evidence="11">Belongs to the GST superfamily. Sigma family.</text>
</comment>
<protein>
    <recommendedName>
        <fullName evidence="11">Hematopoietic prostaglandin D synthase</fullName>
        <shortName>H-PGDS</shortName>
        <ecNumber evidence="1 2 4 6 8 9 10">5.3.99.2</ecNumber>
    </recommendedName>
    <alternativeName>
        <fullName>GST class-sigma</fullName>
    </alternativeName>
    <alternativeName>
        <fullName>Glutathione S-transferase</fullName>
        <ecNumber evidence="1 2 5">2.5.1.18</ecNumber>
    </alternativeName>
    <alternativeName>
        <fullName>Glutathione-dependent PGD synthase</fullName>
    </alternativeName>
    <alternativeName>
        <fullName>Glutathione-requiring prostaglandin D synthase</fullName>
    </alternativeName>
    <alternativeName>
        <fullName>Prostaglandin-H2 D-isomerase</fullName>
    </alternativeName>
</protein>
<evidence type="ECO:0000269" key="1">
    <source>
    </source>
</evidence>
<evidence type="ECO:0000269" key="2">
    <source>
    </source>
</evidence>
<evidence type="ECO:0000269" key="3">
    <source>
    </source>
</evidence>
<evidence type="ECO:0000269" key="4">
    <source>
    </source>
</evidence>
<evidence type="ECO:0000269" key="5">
    <source>
    </source>
</evidence>
<evidence type="ECO:0000269" key="6">
    <source>
    </source>
</evidence>
<evidence type="ECO:0000269" key="7">
    <source>
    </source>
</evidence>
<evidence type="ECO:0000269" key="8">
    <source>
    </source>
</evidence>
<evidence type="ECO:0000269" key="9">
    <source>
    </source>
</evidence>
<evidence type="ECO:0000269" key="10">
    <source>
    </source>
</evidence>
<evidence type="ECO:0000305" key="11"/>
<evidence type="ECO:0000305" key="12">
    <source>
    </source>
</evidence>
<evidence type="ECO:0000305" key="13">
    <source>
    </source>
</evidence>
<evidence type="ECO:0000312" key="14">
    <source>
        <dbReference type="HGNC" id="HGNC:17890"/>
    </source>
</evidence>
<evidence type="ECO:0007829" key="15">
    <source>
        <dbReference type="PDB" id="5AIS"/>
    </source>
</evidence>
<evidence type="ECO:0007829" key="16">
    <source>
        <dbReference type="PDB" id="7JR8"/>
    </source>
</evidence>